<sequence length="906" mass="102133">MISTLLTKIIGSRNDRTLKALRKIVKQINAMEPQFEALSDAQLQAKTAEYRQRLEQGETLEQLLPEAFATVREASRRVFGMRHFDVQLIGGMVLNSNRIAEMKTGEGKTLTATLPAYLNALSGRGVHVVTVNDYLAKRDAEANRPLFAFLGMTVDCNVPGMDASQKRDAYAADITYGTNNEFGFDYLRDNMAFSPEQRVQRPLNYALVDEVDSVLIDEARTPLIISGPAEDSSELYIRVNKLIPLLVKQDKEDSEEYTGDGHYTVDEKNRQALLTENGQIFVEELLKKEGLLAEDDSLFSATNISLLHHVNAGLRAHTLFERNVDYIVQKDEIVIVDEHTGRTMPGRRWSDGLHQAVEAKEGVKIQNENQTLASITFQNYFRLYDKLAGMTGTADTEAFEFQQIYGLDTVVIPTNKPMVRKDMGDLVYLTANEKYAAIIEDIRGCVERGQPVLVGTVSIENSELLSGILTKENIPHKVLNAKFHAMEAEIVAQAGQTGAVTIATNMAGRGTDIVLGGNWQAEIAQLENPTEAQIAELKAAWQVRHDAVLAAGGLHIIGTERHESRRIDNQLRGRSGRQGDPGSSRFYLSMEDTLMRIFASDRVTGMMKKLGMEEGEAIEHPWVTKAIENAQRKVEGRNFDIRKSLLEFDDVANDQRKVVYEQRNELLDTSDISETIHVIRDDVYGAIIDEYIPPQSLEEMWDVPGLEARLKSDFALDLPLQQWLAEDDKLYEEKLRERILDEATKLYAHKEELVGKEVLRNFEKAVMLQTLDGLWKEHLAAMDHLRQGIHLRGYAQKNPKQEYKRESFDLFTQMLETLKRDVVSILSRVQVQERDVEAMEEQQRQQAEAAPRTYTHAAADNQLADDEAQAEAAPVTFVRDEQKVGRNDPCPCGSGKKYKHCHGQLT</sequence>
<proteinExistence type="inferred from homology"/>
<dbReference type="EC" id="7.4.2.8" evidence="1"/>
<dbReference type="EMBL" id="CP000462">
    <property type="protein sequence ID" value="ABK37287.1"/>
    <property type="molecule type" value="Genomic_DNA"/>
</dbReference>
<dbReference type="RefSeq" id="WP_011707576.1">
    <property type="nucleotide sequence ID" value="NC_008570.1"/>
</dbReference>
<dbReference type="RefSeq" id="YP_858316.1">
    <property type="nucleotide sequence ID" value="NC_008570.1"/>
</dbReference>
<dbReference type="SMR" id="A0KPW5"/>
<dbReference type="STRING" id="380703.AHA_3877"/>
<dbReference type="EnsemblBacteria" id="ABK37287">
    <property type="protein sequence ID" value="ABK37287"/>
    <property type="gene ID" value="AHA_3877"/>
</dbReference>
<dbReference type="GeneID" id="4490847"/>
<dbReference type="KEGG" id="aha:AHA_3877"/>
<dbReference type="PATRIC" id="fig|380703.7.peg.3847"/>
<dbReference type="eggNOG" id="COG0653">
    <property type="taxonomic scope" value="Bacteria"/>
</dbReference>
<dbReference type="HOGENOM" id="CLU_005314_3_0_6"/>
<dbReference type="OrthoDB" id="9805579at2"/>
<dbReference type="Proteomes" id="UP000000756">
    <property type="component" value="Chromosome"/>
</dbReference>
<dbReference type="GO" id="GO:0031522">
    <property type="term" value="C:cell envelope Sec protein transport complex"/>
    <property type="evidence" value="ECO:0007669"/>
    <property type="project" value="TreeGrafter"/>
</dbReference>
<dbReference type="GO" id="GO:0005829">
    <property type="term" value="C:cytosol"/>
    <property type="evidence" value="ECO:0007669"/>
    <property type="project" value="TreeGrafter"/>
</dbReference>
<dbReference type="GO" id="GO:0005886">
    <property type="term" value="C:plasma membrane"/>
    <property type="evidence" value="ECO:0007669"/>
    <property type="project" value="UniProtKB-SubCell"/>
</dbReference>
<dbReference type="GO" id="GO:0005524">
    <property type="term" value="F:ATP binding"/>
    <property type="evidence" value="ECO:0007669"/>
    <property type="project" value="UniProtKB-UniRule"/>
</dbReference>
<dbReference type="GO" id="GO:0046872">
    <property type="term" value="F:metal ion binding"/>
    <property type="evidence" value="ECO:0007669"/>
    <property type="project" value="UniProtKB-KW"/>
</dbReference>
<dbReference type="GO" id="GO:0008564">
    <property type="term" value="F:protein-exporting ATPase activity"/>
    <property type="evidence" value="ECO:0007669"/>
    <property type="project" value="UniProtKB-EC"/>
</dbReference>
<dbReference type="GO" id="GO:0065002">
    <property type="term" value="P:intracellular protein transmembrane transport"/>
    <property type="evidence" value="ECO:0007669"/>
    <property type="project" value="UniProtKB-UniRule"/>
</dbReference>
<dbReference type="GO" id="GO:0017038">
    <property type="term" value="P:protein import"/>
    <property type="evidence" value="ECO:0007669"/>
    <property type="project" value="InterPro"/>
</dbReference>
<dbReference type="GO" id="GO:0006605">
    <property type="term" value="P:protein targeting"/>
    <property type="evidence" value="ECO:0007669"/>
    <property type="project" value="UniProtKB-UniRule"/>
</dbReference>
<dbReference type="GO" id="GO:0043952">
    <property type="term" value="P:protein transport by the Sec complex"/>
    <property type="evidence" value="ECO:0007669"/>
    <property type="project" value="TreeGrafter"/>
</dbReference>
<dbReference type="CDD" id="cd17928">
    <property type="entry name" value="DEXDc_SecA"/>
    <property type="match status" value="1"/>
</dbReference>
<dbReference type="CDD" id="cd18803">
    <property type="entry name" value="SF2_C_secA"/>
    <property type="match status" value="1"/>
</dbReference>
<dbReference type="FunFam" id="1.10.3060.10:FF:000001">
    <property type="entry name" value="Preprotein translocase subunit SecA"/>
    <property type="match status" value="1"/>
</dbReference>
<dbReference type="FunFam" id="3.40.50.300:FF:000081">
    <property type="entry name" value="Preprotein translocase subunit SecA"/>
    <property type="match status" value="1"/>
</dbReference>
<dbReference type="FunFam" id="3.40.50.300:FF:000113">
    <property type="entry name" value="Preprotein translocase subunit SecA"/>
    <property type="match status" value="1"/>
</dbReference>
<dbReference type="FunFam" id="3.90.1440.10:FF:000001">
    <property type="entry name" value="Preprotein translocase subunit SecA"/>
    <property type="match status" value="1"/>
</dbReference>
<dbReference type="Gene3D" id="1.10.3060.10">
    <property type="entry name" value="Helical scaffold and wing domains of SecA"/>
    <property type="match status" value="1"/>
</dbReference>
<dbReference type="Gene3D" id="3.40.50.300">
    <property type="entry name" value="P-loop containing nucleotide triphosphate hydrolases"/>
    <property type="match status" value="2"/>
</dbReference>
<dbReference type="Gene3D" id="3.90.1440.10">
    <property type="entry name" value="SecA, preprotein cross-linking domain"/>
    <property type="match status" value="1"/>
</dbReference>
<dbReference type="HAMAP" id="MF_01382">
    <property type="entry name" value="SecA"/>
    <property type="match status" value="1"/>
</dbReference>
<dbReference type="InterPro" id="IPR014001">
    <property type="entry name" value="Helicase_ATP-bd"/>
</dbReference>
<dbReference type="InterPro" id="IPR027417">
    <property type="entry name" value="P-loop_NTPase"/>
</dbReference>
<dbReference type="InterPro" id="IPR004027">
    <property type="entry name" value="SEC_C_motif"/>
</dbReference>
<dbReference type="InterPro" id="IPR000185">
    <property type="entry name" value="SecA"/>
</dbReference>
<dbReference type="InterPro" id="IPR020937">
    <property type="entry name" value="SecA_CS"/>
</dbReference>
<dbReference type="InterPro" id="IPR011115">
    <property type="entry name" value="SecA_DEAD"/>
</dbReference>
<dbReference type="InterPro" id="IPR014018">
    <property type="entry name" value="SecA_motor_DEAD"/>
</dbReference>
<dbReference type="InterPro" id="IPR011130">
    <property type="entry name" value="SecA_preprotein_X-link_dom"/>
</dbReference>
<dbReference type="InterPro" id="IPR044722">
    <property type="entry name" value="SecA_SF2_C"/>
</dbReference>
<dbReference type="InterPro" id="IPR011116">
    <property type="entry name" value="SecA_Wing/Scaffold"/>
</dbReference>
<dbReference type="InterPro" id="IPR036266">
    <property type="entry name" value="SecA_Wing/Scaffold_sf"/>
</dbReference>
<dbReference type="InterPro" id="IPR036670">
    <property type="entry name" value="SecA_X-link_sf"/>
</dbReference>
<dbReference type="NCBIfam" id="NF009538">
    <property type="entry name" value="PRK12904.1"/>
    <property type="match status" value="1"/>
</dbReference>
<dbReference type="NCBIfam" id="TIGR00963">
    <property type="entry name" value="secA"/>
    <property type="match status" value="1"/>
</dbReference>
<dbReference type="PANTHER" id="PTHR30612:SF0">
    <property type="entry name" value="CHLOROPLAST PROTEIN-TRANSPORTING ATPASE"/>
    <property type="match status" value="1"/>
</dbReference>
<dbReference type="PANTHER" id="PTHR30612">
    <property type="entry name" value="SECA INNER MEMBRANE COMPONENT OF SEC PROTEIN SECRETION SYSTEM"/>
    <property type="match status" value="1"/>
</dbReference>
<dbReference type="Pfam" id="PF21090">
    <property type="entry name" value="P-loop_SecA"/>
    <property type="match status" value="1"/>
</dbReference>
<dbReference type="Pfam" id="PF02810">
    <property type="entry name" value="SEC-C"/>
    <property type="match status" value="1"/>
</dbReference>
<dbReference type="Pfam" id="PF07517">
    <property type="entry name" value="SecA_DEAD"/>
    <property type="match status" value="1"/>
</dbReference>
<dbReference type="Pfam" id="PF01043">
    <property type="entry name" value="SecA_PP_bind"/>
    <property type="match status" value="1"/>
</dbReference>
<dbReference type="Pfam" id="PF07516">
    <property type="entry name" value="SecA_SW"/>
    <property type="match status" value="1"/>
</dbReference>
<dbReference type="PRINTS" id="PR00906">
    <property type="entry name" value="SECA"/>
</dbReference>
<dbReference type="SMART" id="SM00957">
    <property type="entry name" value="SecA_DEAD"/>
    <property type="match status" value="1"/>
</dbReference>
<dbReference type="SMART" id="SM00958">
    <property type="entry name" value="SecA_PP_bind"/>
    <property type="match status" value="1"/>
</dbReference>
<dbReference type="SUPFAM" id="SSF81886">
    <property type="entry name" value="Helical scaffold and wing domains of SecA"/>
    <property type="match status" value="1"/>
</dbReference>
<dbReference type="SUPFAM" id="SSF52540">
    <property type="entry name" value="P-loop containing nucleoside triphosphate hydrolases"/>
    <property type="match status" value="2"/>
</dbReference>
<dbReference type="SUPFAM" id="SSF81767">
    <property type="entry name" value="Pre-protein crosslinking domain of SecA"/>
    <property type="match status" value="1"/>
</dbReference>
<dbReference type="PROSITE" id="PS01312">
    <property type="entry name" value="SECA"/>
    <property type="match status" value="1"/>
</dbReference>
<dbReference type="PROSITE" id="PS51196">
    <property type="entry name" value="SECA_MOTOR_DEAD"/>
    <property type="match status" value="1"/>
</dbReference>
<keyword id="KW-0067">ATP-binding</keyword>
<keyword id="KW-0997">Cell inner membrane</keyword>
<keyword id="KW-1003">Cell membrane</keyword>
<keyword id="KW-0963">Cytoplasm</keyword>
<keyword id="KW-0472">Membrane</keyword>
<keyword id="KW-0479">Metal-binding</keyword>
<keyword id="KW-0547">Nucleotide-binding</keyword>
<keyword id="KW-0653">Protein transport</keyword>
<keyword id="KW-1185">Reference proteome</keyword>
<keyword id="KW-1278">Translocase</keyword>
<keyword id="KW-0811">Translocation</keyword>
<keyword id="KW-0813">Transport</keyword>
<keyword id="KW-0862">Zinc</keyword>
<evidence type="ECO:0000255" key="1">
    <source>
        <dbReference type="HAMAP-Rule" id="MF_01382"/>
    </source>
</evidence>
<evidence type="ECO:0000256" key="2">
    <source>
        <dbReference type="SAM" id="MobiDB-lite"/>
    </source>
</evidence>
<feature type="chain" id="PRO_0000320715" description="Protein translocase subunit SecA">
    <location>
        <begin position="1"/>
        <end position="906"/>
    </location>
</feature>
<feature type="region of interest" description="Disordered" evidence="2">
    <location>
        <begin position="875"/>
        <end position="897"/>
    </location>
</feature>
<feature type="binding site" evidence="1">
    <location>
        <position position="87"/>
    </location>
    <ligand>
        <name>ATP</name>
        <dbReference type="ChEBI" id="CHEBI:30616"/>
    </ligand>
</feature>
<feature type="binding site" evidence="1">
    <location>
        <begin position="105"/>
        <end position="109"/>
    </location>
    <ligand>
        <name>ATP</name>
        <dbReference type="ChEBI" id="CHEBI:30616"/>
    </ligand>
</feature>
<feature type="binding site" evidence="1">
    <location>
        <position position="512"/>
    </location>
    <ligand>
        <name>ATP</name>
        <dbReference type="ChEBI" id="CHEBI:30616"/>
    </ligand>
</feature>
<feature type="binding site" evidence="1">
    <location>
        <position position="890"/>
    </location>
    <ligand>
        <name>Zn(2+)</name>
        <dbReference type="ChEBI" id="CHEBI:29105"/>
    </ligand>
</feature>
<feature type="binding site" evidence="1">
    <location>
        <position position="892"/>
    </location>
    <ligand>
        <name>Zn(2+)</name>
        <dbReference type="ChEBI" id="CHEBI:29105"/>
    </ligand>
</feature>
<feature type="binding site" evidence="1">
    <location>
        <position position="901"/>
    </location>
    <ligand>
        <name>Zn(2+)</name>
        <dbReference type="ChEBI" id="CHEBI:29105"/>
    </ligand>
</feature>
<feature type="binding site" evidence="1">
    <location>
        <position position="902"/>
    </location>
    <ligand>
        <name>Zn(2+)</name>
        <dbReference type="ChEBI" id="CHEBI:29105"/>
    </ligand>
</feature>
<reference key="1">
    <citation type="journal article" date="2006" name="J. Bacteriol.">
        <title>Genome sequence of Aeromonas hydrophila ATCC 7966T: jack of all trades.</title>
        <authorList>
            <person name="Seshadri R."/>
            <person name="Joseph S.W."/>
            <person name="Chopra A.K."/>
            <person name="Sha J."/>
            <person name="Shaw J."/>
            <person name="Graf J."/>
            <person name="Haft D.H."/>
            <person name="Wu M."/>
            <person name="Ren Q."/>
            <person name="Rosovitz M.J."/>
            <person name="Madupu R."/>
            <person name="Tallon L."/>
            <person name="Kim M."/>
            <person name="Jin S."/>
            <person name="Vuong H."/>
            <person name="Stine O.C."/>
            <person name="Ali A."/>
            <person name="Horneman A.J."/>
            <person name="Heidelberg J.F."/>
        </authorList>
    </citation>
    <scope>NUCLEOTIDE SEQUENCE [LARGE SCALE GENOMIC DNA]</scope>
    <source>
        <strain>ATCC 7966 / DSM 30187 / BCRC 13018 / CCUG 14551 / JCM 1027 / KCTC 2358 / NCIMB 9240 / NCTC 8049</strain>
    </source>
</reference>
<name>SECA_AERHH</name>
<comment type="function">
    <text evidence="1">Part of the Sec protein translocase complex. Interacts with the SecYEG preprotein conducting channel. Has a central role in coupling the hydrolysis of ATP to the transfer of proteins into and across the cell membrane, serving both as a receptor for the preprotein-SecB complex and as an ATP-driven molecular motor driving the stepwise translocation of polypeptide chains across the membrane.</text>
</comment>
<comment type="catalytic activity">
    <reaction evidence="1">
        <text>ATP + H2O + cellular proteinSide 1 = ADP + phosphate + cellular proteinSide 2.</text>
        <dbReference type="EC" id="7.4.2.8"/>
    </reaction>
</comment>
<comment type="cofactor">
    <cofactor evidence="1">
        <name>Zn(2+)</name>
        <dbReference type="ChEBI" id="CHEBI:29105"/>
    </cofactor>
    <text evidence="1">May bind 1 zinc ion per subunit.</text>
</comment>
<comment type="subunit">
    <text evidence="1">Monomer and homodimer. Part of the essential Sec protein translocation apparatus which comprises SecA, SecYEG and auxiliary proteins SecDF-YajC and YidC.</text>
</comment>
<comment type="subcellular location">
    <subcellularLocation>
        <location evidence="1">Cell inner membrane</location>
        <topology evidence="1">Peripheral membrane protein</topology>
        <orientation evidence="1">Cytoplasmic side</orientation>
    </subcellularLocation>
    <subcellularLocation>
        <location evidence="1">Cytoplasm</location>
    </subcellularLocation>
    <text evidence="1">Distribution is 50-50.</text>
</comment>
<comment type="similarity">
    <text evidence="1">Belongs to the SecA family.</text>
</comment>
<organism>
    <name type="scientific">Aeromonas hydrophila subsp. hydrophila (strain ATCC 7966 / DSM 30187 / BCRC 13018 / CCUG 14551 / JCM 1027 / KCTC 2358 / NCIMB 9240 / NCTC 8049)</name>
    <dbReference type="NCBI Taxonomy" id="380703"/>
    <lineage>
        <taxon>Bacteria</taxon>
        <taxon>Pseudomonadati</taxon>
        <taxon>Pseudomonadota</taxon>
        <taxon>Gammaproteobacteria</taxon>
        <taxon>Aeromonadales</taxon>
        <taxon>Aeromonadaceae</taxon>
        <taxon>Aeromonas</taxon>
    </lineage>
</organism>
<accession>A0KPW5</accession>
<gene>
    <name evidence="1" type="primary">secA</name>
    <name type="ordered locus">AHA_3877</name>
</gene>
<protein>
    <recommendedName>
        <fullName evidence="1">Protein translocase subunit SecA</fullName>
        <ecNumber evidence="1">7.4.2.8</ecNumber>
    </recommendedName>
</protein>